<comment type="function">
    <text evidence="1">Endonuclease that specifically degrades the RNA of RNA-DNA hybrids.</text>
</comment>
<comment type="catalytic activity">
    <reaction evidence="1">
        <text>Endonucleolytic cleavage to 5'-phosphomonoester.</text>
        <dbReference type="EC" id="3.1.26.4"/>
    </reaction>
</comment>
<comment type="cofactor">
    <cofactor evidence="1">
        <name>Mn(2+)</name>
        <dbReference type="ChEBI" id="CHEBI:29035"/>
    </cofactor>
    <cofactor evidence="1">
        <name>Mg(2+)</name>
        <dbReference type="ChEBI" id="CHEBI:18420"/>
    </cofactor>
    <text evidence="1">Manganese or magnesium. Binds 1 divalent metal ion per monomer in the absence of substrate. May bind a second metal ion after substrate binding.</text>
</comment>
<comment type="subcellular location">
    <subcellularLocation>
        <location evidence="1">Cytoplasm</location>
    </subcellularLocation>
</comment>
<comment type="similarity">
    <text evidence="1">Belongs to the RNase HII family.</text>
</comment>
<keyword id="KW-0963">Cytoplasm</keyword>
<keyword id="KW-0255">Endonuclease</keyword>
<keyword id="KW-0378">Hydrolase</keyword>
<keyword id="KW-0464">Manganese</keyword>
<keyword id="KW-0479">Metal-binding</keyword>
<keyword id="KW-0540">Nuclease</keyword>
<keyword id="KW-1185">Reference proteome</keyword>
<accession>A5CDI4</accession>
<dbReference type="EC" id="3.1.26.4" evidence="1"/>
<dbReference type="EMBL" id="AM494475">
    <property type="protein sequence ID" value="CAM79925.1"/>
    <property type="molecule type" value="Genomic_DNA"/>
</dbReference>
<dbReference type="RefSeq" id="WP_011944683.1">
    <property type="nucleotide sequence ID" value="NC_009488.1"/>
</dbReference>
<dbReference type="SMR" id="A5CDI4"/>
<dbReference type="KEGG" id="ots:OTBS_0859"/>
<dbReference type="eggNOG" id="COG0164">
    <property type="taxonomic scope" value="Bacteria"/>
</dbReference>
<dbReference type="HOGENOM" id="CLU_036532_3_1_5"/>
<dbReference type="Proteomes" id="UP000001565">
    <property type="component" value="Chromosome"/>
</dbReference>
<dbReference type="GO" id="GO:0005737">
    <property type="term" value="C:cytoplasm"/>
    <property type="evidence" value="ECO:0007669"/>
    <property type="project" value="UniProtKB-SubCell"/>
</dbReference>
<dbReference type="GO" id="GO:0032299">
    <property type="term" value="C:ribonuclease H2 complex"/>
    <property type="evidence" value="ECO:0007669"/>
    <property type="project" value="TreeGrafter"/>
</dbReference>
<dbReference type="GO" id="GO:0030145">
    <property type="term" value="F:manganese ion binding"/>
    <property type="evidence" value="ECO:0007669"/>
    <property type="project" value="UniProtKB-UniRule"/>
</dbReference>
<dbReference type="GO" id="GO:0003723">
    <property type="term" value="F:RNA binding"/>
    <property type="evidence" value="ECO:0007669"/>
    <property type="project" value="InterPro"/>
</dbReference>
<dbReference type="GO" id="GO:0004523">
    <property type="term" value="F:RNA-DNA hybrid ribonuclease activity"/>
    <property type="evidence" value="ECO:0007669"/>
    <property type="project" value="UniProtKB-UniRule"/>
</dbReference>
<dbReference type="GO" id="GO:0043137">
    <property type="term" value="P:DNA replication, removal of RNA primer"/>
    <property type="evidence" value="ECO:0007669"/>
    <property type="project" value="TreeGrafter"/>
</dbReference>
<dbReference type="GO" id="GO:0006298">
    <property type="term" value="P:mismatch repair"/>
    <property type="evidence" value="ECO:0007669"/>
    <property type="project" value="TreeGrafter"/>
</dbReference>
<dbReference type="CDD" id="cd07182">
    <property type="entry name" value="RNase_HII_bacteria_HII_like"/>
    <property type="match status" value="1"/>
</dbReference>
<dbReference type="Gene3D" id="3.30.420.10">
    <property type="entry name" value="Ribonuclease H-like superfamily/Ribonuclease H"/>
    <property type="match status" value="1"/>
</dbReference>
<dbReference type="HAMAP" id="MF_00052_B">
    <property type="entry name" value="RNase_HII_B"/>
    <property type="match status" value="1"/>
</dbReference>
<dbReference type="InterPro" id="IPR022898">
    <property type="entry name" value="RNase_HII"/>
</dbReference>
<dbReference type="InterPro" id="IPR001352">
    <property type="entry name" value="RNase_HII/HIII"/>
</dbReference>
<dbReference type="InterPro" id="IPR024567">
    <property type="entry name" value="RNase_HII/HIII_dom"/>
</dbReference>
<dbReference type="InterPro" id="IPR012337">
    <property type="entry name" value="RNaseH-like_sf"/>
</dbReference>
<dbReference type="InterPro" id="IPR036397">
    <property type="entry name" value="RNaseH_sf"/>
</dbReference>
<dbReference type="NCBIfam" id="NF000595">
    <property type="entry name" value="PRK00015.1-3"/>
    <property type="match status" value="1"/>
</dbReference>
<dbReference type="PANTHER" id="PTHR10954">
    <property type="entry name" value="RIBONUCLEASE H2 SUBUNIT A"/>
    <property type="match status" value="1"/>
</dbReference>
<dbReference type="PANTHER" id="PTHR10954:SF18">
    <property type="entry name" value="RIBONUCLEASE HII"/>
    <property type="match status" value="1"/>
</dbReference>
<dbReference type="Pfam" id="PF01351">
    <property type="entry name" value="RNase_HII"/>
    <property type="match status" value="1"/>
</dbReference>
<dbReference type="SUPFAM" id="SSF53098">
    <property type="entry name" value="Ribonuclease H-like"/>
    <property type="match status" value="1"/>
</dbReference>
<dbReference type="PROSITE" id="PS51975">
    <property type="entry name" value="RNASE_H_2"/>
    <property type="match status" value="1"/>
</dbReference>
<reference key="1">
    <citation type="journal article" date="2007" name="Proc. Natl. Acad. Sci. U.S.A.">
        <title>The Orientia tsutsugamushi genome reveals massive proliferation of conjugative type IV secretion system and host-cell interaction genes.</title>
        <authorList>
            <person name="Cho N.-H."/>
            <person name="Kim H.-R."/>
            <person name="Lee J.-H."/>
            <person name="Kim S.-Y."/>
            <person name="Kim J."/>
            <person name="Cha S."/>
            <person name="Kim S.-Y."/>
            <person name="Darby A.C."/>
            <person name="Fuxelius H.-H."/>
            <person name="Yin J."/>
            <person name="Kim J.H."/>
            <person name="Kim J."/>
            <person name="Lee S.J."/>
            <person name="Koh Y.-S."/>
            <person name="Jang W.-J."/>
            <person name="Park K.-H."/>
            <person name="Andersson S.G.E."/>
            <person name="Choi M.-S."/>
            <person name="Kim I.-S."/>
        </authorList>
    </citation>
    <scope>NUCLEOTIDE SEQUENCE [LARGE SCALE GENOMIC DNA]</scope>
    <source>
        <strain>Boryong</strain>
    </source>
</reference>
<feature type="chain" id="PRO_0000334929" description="Ribonuclease HII">
    <location>
        <begin position="1"/>
        <end position="205"/>
    </location>
</feature>
<feature type="domain" description="RNase H type-2" evidence="2">
    <location>
        <begin position="14"/>
        <end position="201"/>
    </location>
</feature>
<feature type="binding site" evidence="1">
    <location>
        <position position="20"/>
    </location>
    <ligand>
        <name>a divalent metal cation</name>
        <dbReference type="ChEBI" id="CHEBI:60240"/>
    </ligand>
</feature>
<feature type="binding site" evidence="1">
    <location>
        <position position="21"/>
    </location>
    <ligand>
        <name>a divalent metal cation</name>
        <dbReference type="ChEBI" id="CHEBI:60240"/>
    </ligand>
</feature>
<feature type="binding site" evidence="1">
    <location>
        <position position="111"/>
    </location>
    <ligand>
        <name>a divalent metal cation</name>
        <dbReference type="ChEBI" id="CHEBI:60240"/>
    </ligand>
</feature>
<organism>
    <name type="scientific">Orientia tsutsugamushi (strain Boryong)</name>
    <name type="common">Rickettsia tsutsugamushi</name>
    <dbReference type="NCBI Taxonomy" id="357244"/>
    <lineage>
        <taxon>Bacteria</taxon>
        <taxon>Pseudomonadati</taxon>
        <taxon>Pseudomonadota</taxon>
        <taxon>Alphaproteobacteria</taxon>
        <taxon>Rickettsiales</taxon>
        <taxon>Rickettsiaceae</taxon>
        <taxon>Rickettsieae</taxon>
        <taxon>Orientia</taxon>
    </lineage>
</organism>
<name>RNH2_ORITB</name>
<proteinExistence type="inferred from homology"/>
<evidence type="ECO:0000255" key="1">
    <source>
        <dbReference type="HAMAP-Rule" id="MF_00052"/>
    </source>
</evidence>
<evidence type="ECO:0000255" key="2">
    <source>
        <dbReference type="PROSITE-ProRule" id="PRU01319"/>
    </source>
</evidence>
<gene>
    <name evidence="1" type="primary">rnhB</name>
    <name type="ordered locus">OTBS_0859</name>
</gene>
<sequence>MNPNLNIEQDNASEIVAGVDEAGRGPLAGPVVAAAVVVNQSIMIDDIKDSKVLSKSKRESCYDKITNSYYYSIGIASVQEIDKYNILEATKLACIRAVKNLAIIPTKVLVDGNMNFTDNRFISIVRGDQICYSISSASIVAKVTRDRIMQILHKEYPVYGWNQNCGYGTKLHIDAIKTYGQTIHHRVSFKFKGNINHSAILGNMV</sequence>
<protein>
    <recommendedName>
        <fullName evidence="1">Ribonuclease HII</fullName>
        <shortName evidence="1">RNase HII</shortName>
        <ecNumber evidence="1">3.1.26.4</ecNumber>
    </recommendedName>
</protein>